<evidence type="ECO:0000250" key="1">
    <source>
        <dbReference type="UniProtKB" id="G7CBF6"/>
    </source>
</evidence>
<evidence type="ECO:0000255" key="2"/>
<evidence type="ECO:0000255" key="3">
    <source>
        <dbReference type="PROSITE-ProRule" id="PRU00434"/>
    </source>
</evidence>
<evidence type="ECO:0000255" key="4">
    <source>
        <dbReference type="PROSITE-ProRule" id="PRU00441"/>
    </source>
</evidence>
<evidence type="ECO:0000269" key="5">
    <source>
    </source>
</evidence>
<evidence type="ECO:0000303" key="6">
    <source>
    </source>
</evidence>
<evidence type="ECO:0000305" key="7"/>
<evidence type="ECO:0000312" key="8">
    <source>
        <dbReference type="EMBL" id="ABK71448.1"/>
    </source>
</evidence>
<evidence type="ECO:0000312" key="9">
    <source>
        <dbReference type="EMBL" id="AFP42802.1"/>
    </source>
</evidence>
<protein>
    <recommendedName>
        <fullName evidence="7">Mycobactin import ATP-binding/permease protein IrtB</fullName>
        <ecNumber evidence="5">7.2.2.-</ecNumber>
    </recommendedName>
</protein>
<keyword id="KW-0067">ATP-binding</keyword>
<keyword id="KW-0997">Cell inner membrane</keyword>
<keyword id="KW-1003">Cell membrane</keyword>
<keyword id="KW-0472">Membrane</keyword>
<keyword id="KW-0547">Nucleotide-binding</keyword>
<keyword id="KW-1185">Reference proteome</keyword>
<keyword id="KW-1278">Translocase</keyword>
<keyword id="KW-0812">Transmembrane</keyword>
<keyword id="KW-1133">Transmembrane helix</keyword>
<keyword id="KW-0813">Transport</keyword>
<feature type="chain" id="PRO_0000450630" description="Mycobactin import ATP-binding/permease protein IrtB">
    <location>
        <begin position="1"/>
        <end position="576"/>
    </location>
</feature>
<feature type="topological domain" description="Cytoplasmic" evidence="7">
    <location>
        <begin position="1"/>
        <end position="25"/>
    </location>
</feature>
<feature type="transmembrane region" description="Helical" evidence="2 4">
    <location>
        <begin position="26"/>
        <end position="46"/>
    </location>
</feature>
<feature type="topological domain" description="Periplasmic" evidence="7">
    <location>
        <begin position="47"/>
        <end position="52"/>
    </location>
</feature>
<feature type="transmembrane region" description="Helical" evidence="2 4">
    <location>
        <begin position="53"/>
        <end position="73"/>
    </location>
</feature>
<feature type="topological domain" description="Cytoplasmic" evidence="7">
    <location>
        <begin position="74"/>
        <end position="131"/>
    </location>
</feature>
<feature type="transmembrane region" description="Helical" evidence="2 4">
    <location>
        <begin position="132"/>
        <end position="152"/>
    </location>
</feature>
<feature type="transmembrane region" description="Helical" evidence="2 4">
    <location>
        <begin position="153"/>
        <end position="173"/>
    </location>
</feature>
<feature type="topological domain" description="Cytoplasmic" evidence="7">
    <location>
        <begin position="174"/>
        <end position="241"/>
    </location>
</feature>
<feature type="transmembrane region" description="Helical" evidence="2 4">
    <location>
        <begin position="242"/>
        <end position="262"/>
    </location>
</feature>
<feature type="topological domain" description="Periplasmic" evidence="7">
    <location>
        <begin position="263"/>
        <end position="267"/>
    </location>
</feature>
<feature type="transmembrane region" description="Helical" evidence="2 4">
    <location>
        <begin position="268"/>
        <end position="288"/>
    </location>
</feature>
<feature type="topological domain" description="Cytoplasmic" evidence="7">
    <location>
        <begin position="289"/>
        <end position="576"/>
    </location>
</feature>
<feature type="domain" description="ABC transmembrane type-1" evidence="4">
    <location>
        <begin position="19"/>
        <end position="299"/>
    </location>
</feature>
<feature type="domain" description="ABC transporter" evidence="3">
    <location>
        <begin position="332"/>
        <end position="565"/>
    </location>
</feature>
<feature type="binding site" evidence="3">
    <location>
        <begin position="364"/>
        <end position="371"/>
    </location>
    <ligand>
        <name>ATP</name>
        <dbReference type="ChEBI" id="CHEBI:30616"/>
    </ligand>
</feature>
<organism>
    <name type="scientific">Mycolicibacterium smegmatis (strain ATCC 700084 / mc(2)155)</name>
    <name type="common">Mycobacterium smegmatis</name>
    <dbReference type="NCBI Taxonomy" id="246196"/>
    <lineage>
        <taxon>Bacteria</taxon>
        <taxon>Bacillati</taxon>
        <taxon>Actinomycetota</taxon>
        <taxon>Actinomycetes</taxon>
        <taxon>Mycobacteriales</taxon>
        <taxon>Mycobacteriaceae</taxon>
        <taxon>Mycolicibacterium</taxon>
    </lineage>
</organism>
<sequence length="576" mass="60650">MIRTLIALVPADKRGTLGLYTVLTVLSVVIRAAGTVLLVPLVAALFGDTPQDAWPWLGWLTAATAAGWIVDTTTSRLGFDLGFAVLDHTQHDVADRMPNIRLDWLTAENTATARAAIASTGPELVGLVVNLLTPLIGAVLLPAAIAVALVAVSPPLGLAALAGVVVLLGAMWASNRLSRKADTVADETNSAFTERIIEFARTQQALRAARRVEPARSLVGDALGAQHGAGVRLLAMQIPGQLLFSLASQLALILLAGMATWLTVRGELSVPEAVAMIVVVARYLEPFTSLSELTPAIESTRGTLGRIRAVLDAPTLTAGDAAPADTKSAPRIEFDCVTFGYGDHPVLDDVSFVLEPGSTTAIVGPSGSGKSTILSLIAGLHQPTEGRVLIDGVDAASLDDESRRAATSVVFQQPYLFDGSIRDNILVGDPGADEDRLAAAVRLARVDELTARLPNGDASKVGEAGAALSGGERQRVSIARALVKPAPVLLVDEATSALDTENEAAVVDALTADLRHRTRVIVAHRLASIRHADRVLFLDGGRIVEDGTIDGLLAAGGRFDEFWRRQHEAADWQITH</sequence>
<reference key="1">
    <citation type="submission" date="2006-10" db="EMBL/GenBank/DDBJ databases">
        <authorList>
            <person name="Fleischmann R.D."/>
            <person name="Dodson R.J."/>
            <person name="Haft D.H."/>
            <person name="Merkel J.S."/>
            <person name="Nelson W.C."/>
            <person name="Fraser C.M."/>
        </authorList>
    </citation>
    <scope>NUCLEOTIDE SEQUENCE [LARGE SCALE GENOMIC DNA]</scope>
    <source>
        <strain>ATCC 700084 / mc(2)155</strain>
    </source>
</reference>
<reference key="2">
    <citation type="journal article" date="2007" name="Genome Biol.">
        <title>Interrupted coding sequences in Mycobacterium smegmatis: authentic mutations or sequencing errors?</title>
        <authorList>
            <person name="Deshayes C."/>
            <person name="Perrodou E."/>
            <person name="Gallien S."/>
            <person name="Euphrasie D."/>
            <person name="Schaeffer C."/>
            <person name="Van-Dorsselaer A."/>
            <person name="Poch O."/>
            <person name="Lecompte O."/>
            <person name="Reyrat J.-M."/>
        </authorList>
    </citation>
    <scope>NUCLEOTIDE SEQUENCE [LARGE SCALE GENOMIC DNA]</scope>
    <source>
        <strain>ATCC 700084 / mc(2)155</strain>
    </source>
</reference>
<reference key="3">
    <citation type="journal article" date="2009" name="Genome Res.">
        <title>Ortho-proteogenomics: multiple proteomes investigation through orthology and a new MS-based protocol.</title>
        <authorList>
            <person name="Gallien S."/>
            <person name="Perrodou E."/>
            <person name="Carapito C."/>
            <person name="Deshayes C."/>
            <person name="Reyrat J.-M."/>
            <person name="Van Dorsselaer A."/>
            <person name="Poch O."/>
            <person name="Schaeffer C."/>
            <person name="Lecompte O."/>
        </authorList>
    </citation>
    <scope>NUCLEOTIDE SEQUENCE [LARGE SCALE GENOMIC DNA]</scope>
    <source>
        <strain>ATCC 700084 / mc(2)155</strain>
    </source>
</reference>
<reference key="4">
    <citation type="journal article" date="2020" name="Nature">
        <title>The ABC exporter IrtAB imports and reduces mycobacterial siderophores.</title>
        <authorList>
            <person name="Arnold F.M."/>
            <person name="Weber M.S."/>
            <person name="Gonda I."/>
            <person name="Gallenito M.J."/>
            <person name="Adenau S."/>
            <person name="Egloff P."/>
            <person name="Zimmermann I."/>
            <person name="Hutter C.A.J."/>
            <person name="Huerlimann L.M."/>
            <person name="Peters E.E."/>
            <person name="Piel J."/>
            <person name="Meloni G."/>
            <person name="Medalia O."/>
            <person name="Seeger M.A."/>
        </authorList>
    </citation>
    <scope>FUNCTION</scope>
    <scope>SUBUNIT</scope>
    <scope>DOMAIN</scope>
    <source>
        <strain>ATCC 700084 / mc(2)155</strain>
    </source>
</reference>
<gene>
    <name evidence="6" type="primary">irtB</name>
    <name evidence="8" type="ordered locus">MSMEG_6553</name>
    <name evidence="9" type="ordered locus">MSMEI_6376</name>
</gene>
<proteinExistence type="evidence at protein level"/>
<comment type="function">
    <text evidence="5">Part of the ABC transporter complex IrtAB involved in the import of iron-bound mycobactin (Fe-MBT) and carboxymycobactin (Fe-cMBT) (PubMed:32296173). Has a preference for Fe-MBT over Fe-cMBT (PubMed:32296173). Transmembrane domains (TMD) form a pore in the membrane and the ATP-binding domain (NBD) is responsible for energy generation (PubMed:32296173).</text>
</comment>
<comment type="subunit">
    <text evidence="5">Forms a heterodimer with IrtA.</text>
</comment>
<comment type="subcellular location">
    <subcellularLocation>
        <location evidence="1">Cell inner membrane</location>
        <topology evidence="1">Multi-pass membrane protein</topology>
    </subcellularLocation>
</comment>
<comment type="domain">
    <text evidence="5">In IrtB the ATP-binding domain (NBD) and the transmembrane domain (TMD) are fused.</text>
</comment>
<comment type="similarity">
    <text evidence="7">Belongs to the ABC transporter superfamily. Siderophore-Fe(3+) uptake transporter (SIUT) (TC 3.A.1.21) family.</text>
</comment>
<dbReference type="EC" id="7.2.2.-" evidence="5"/>
<dbReference type="EMBL" id="CP000480">
    <property type="protein sequence ID" value="ABK71448.1"/>
    <property type="molecule type" value="Genomic_DNA"/>
</dbReference>
<dbReference type="EMBL" id="CP001663">
    <property type="protein sequence ID" value="AFP42802.1"/>
    <property type="molecule type" value="Genomic_DNA"/>
</dbReference>
<dbReference type="RefSeq" id="WP_011731354.1">
    <property type="nucleotide sequence ID" value="NZ_SIJM01000033.1"/>
</dbReference>
<dbReference type="RefSeq" id="YP_890765.1">
    <property type="nucleotide sequence ID" value="NC_008596.1"/>
</dbReference>
<dbReference type="SMR" id="A0R6H7"/>
<dbReference type="STRING" id="246196.MSMEG_6553"/>
<dbReference type="PaxDb" id="246196-MSMEI_6376"/>
<dbReference type="GeneID" id="93461142"/>
<dbReference type="KEGG" id="msb:LJ00_32390"/>
<dbReference type="KEGG" id="msg:MSMEI_6376"/>
<dbReference type="KEGG" id="msm:MSMEG_6553"/>
<dbReference type="PATRIC" id="fig|246196.19.peg.6377"/>
<dbReference type="eggNOG" id="COG1132">
    <property type="taxonomic scope" value="Bacteria"/>
</dbReference>
<dbReference type="OrthoDB" id="9806127at2"/>
<dbReference type="Proteomes" id="UP000000757">
    <property type="component" value="Chromosome"/>
</dbReference>
<dbReference type="Proteomes" id="UP000006158">
    <property type="component" value="Chromosome"/>
</dbReference>
<dbReference type="GO" id="GO:0005886">
    <property type="term" value="C:plasma membrane"/>
    <property type="evidence" value="ECO:0007669"/>
    <property type="project" value="UniProtKB-SubCell"/>
</dbReference>
<dbReference type="GO" id="GO:0140359">
    <property type="term" value="F:ABC-type transporter activity"/>
    <property type="evidence" value="ECO:0007669"/>
    <property type="project" value="InterPro"/>
</dbReference>
<dbReference type="GO" id="GO:0005524">
    <property type="term" value="F:ATP binding"/>
    <property type="evidence" value="ECO:0007669"/>
    <property type="project" value="UniProtKB-KW"/>
</dbReference>
<dbReference type="GO" id="GO:0016887">
    <property type="term" value="F:ATP hydrolysis activity"/>
    <property type="evidence" value="ECO:0007669"/>
    <property type="project" value="InterPro"/>
</dbReference>
<dbReference type="GO" id="GO:0034040">
    <property type="term" value="F:ATPase-coupled lipid transmembrane transporter activity"/>
    <property type="evidence" value="ECO:0007669"/>
    <property type="project" value="TreeGrafter"/>
</dbReference>
<dbReference type="FunFam" id="3.40.50.300:FF:000221">
    <property type="entry name" value="Multidrug ABC transporter ATP-binding protein"/>
    <property type="match status" value="1"/>
</dbReference>
<dbReference type="Gene3D" id="1.20.1560.10">
    <property type="entry name" value="ABC transporter type 1, transmembrane domain"/>
    <property type="match status" value="1"/>
</dbReference>
<dbReference type="Gene3D" id="3.40.50.300">
    <property type="entry name" value="P-loop containing nucleotide triphosphate hydrolases"/>
    <property type="match status" value="1"/>
</dbReference>
<dbReference type="InterPro" id="IPR003593">
    <property type="entry name" value="AAA+_ATPase"/>
</dbReference>
<dbReference type="InterPro" id="IPR011527">
    <property type="entry name" value="ABC1_TM_dom"/>
</dbReference>
<dbReference type="InterPro" id="IPR036640">
    <property type="entry name" value="ABC1_TM_sf"/>
</dbReference>
<dbReference type="InterPro" id="IPR003439">
    <property type="entry name" value="ABC_transporter-like_ATP-bd"/>
</dbReference>
<dbReference type="InterPro" id="IPR017871">
    <property type="entry name" value="ABC_transporter-like_CS"/>
</dbReference>
<dbReference type="InterPro" id="IPR027417">
    <property type="entry name" value="P-loop_NTPase"/>
</dbReference>
<dbReference type="InterPro" id="IPR039421">
    <property type="entry name" value="Type_1_exporter"/>
</dbReference>
<dbReference type="PANTHER" id="PTHR24221">
    <property type="entry name" value="ATP-BINDING CASSETTE SUB-FAMILY B"/>
    <property type="match status" value="1"/>
</dbReference>
<dbReference type="PANTHER" id="PTHR24221:SF654">
    <property type="entry name" value="ATP-BINDING CASSETTE SUB-FAMILY B MEMBER 6"/>
    <property type="match status" value="1"/>
</dbReference>
<dbReference type="Pfam" id="PF00005">
    <property type="entry name" value="ABC_tran"/>
    <property type="match status" value="1"/>
</dbReference>
<dbReference type="SMART" id="SM00382">
    <property type="entry name" value="AAA"/>
    <property type="match status" value="1"/>
</dbReference>
<dbReference type="SUPFAM" id="SSF90123">
    <property type="entry name" value="ABC transporter transmembrane region"/>
    <property type="match status" value="1"/>
</dbReference>
<dbReference type="SUPFAM" id="SSF52540">
    <property type="entry name" value="P-loop containing nucleoside triphosphate hydrolases"/>
    <property type="match status" value="1"/>
</dbReference>
<dbReference type="PROSITE" id="PS50929">
    <property type="entry name" value="ABC_TM1F"/>
    <property type="match status" value="1"/>
</dbReference>
<dbReference type="PROSITE" id="PS00211">
    <property type="entry name" value="ABC_TRANSPORTER_1"/>
    <property type="match status" value="1"/>
</dbReference>
<dbReference type="PROSITE" id="PS50893">
    <property type="entry name" value="ABC_TRANSPORTER_2"/>
    <property type="match status" value="1"/>
</dbReference>
<accession>A0R6H7</accession>
<accession>I7GB23</accession>
<name>IRTB_MYCS2</name>